<reference key="1">
    <citation type="journal article" date="1997" name="J. Virol.">
        <title>Primary structure of the alcelaphine herpesvirus 1 genome.</title>
        <authorList>
            <person name="Ensser A."/>
            <person name="Pflanz R."/>
            <person name="Fleckenstein B."/>
        </authorList>
    </citation>
    <scope>NUCLEOTIDE SEQUENCE [LARGE SCALE GENOMIC DNA]</scope>
</reference>
<gene>
    <name type="primary">64</name>
</gene>
<protein>
    <recommendedName>
        <fullName evidence="1">Large tegument protein deneddylase</fullName>
        <ecNumber evidence="1">3.4.19.12</ecNumber>
        <ecNumber evidence="1">3.4.22.-</ecNumber>
    </recommendedName>
</protein>
<keyword id="KW-1035">Host cytoplasm</keyword>
<keyword id="KW-1048">Host nucleus</keyword>
<keyword id="KW-0945">Host-virus interaction</keyword>
<keyword id="KW-0378">Hydrolase</keyword>
<keyword id="KW-1127">Modulation of host ubiquitin pathway by viral deubiquitinase</keyword>
<keyword id="KW-1130">Modulation of host ubiquitin pathway by virus</keyword>
<keyword id="KW-0645">Protease</keyword>
<keyword id="KW-1185">Reference proteome</keyword>
<keyword id="KW-0677">Repeat</keyword>
<keyword id="KW-0788">Thiol protease</keyword>
<keyword id="KW-0833">Ubl conjugation pathway</keyword>
<keyword id="KW-0946">Virion</keyword>
<keyword id="KW-0920">Virion tegument</keyword>
<feature type="chain" id="PRO_0000405760" description="Large tegument protein deneddylase">
    <location>
        <begin position="1"/>
        <end position="2606"/>
    </location>
</feature>
<feature type="domain" description="Peptidase C76" evidence="1">
    <location>
        <begin position="14"/>
        <end position="225"/>
    </location>
</feature>
<feature type="region of interest" description="Deubiquitination activity" evidence="1">
    <location>
        <begin position="1"/>
        <end position="235"/>
    </location>
</feature>
<feature type="region of interest" description="Disordered" evidence="2">
    <location>
        <begin position="318"/>
        <end position="349"/>
    </location>
</feature>
<feature type="region of interest" description="Disordered" evidence="2">
    <location>
        <begin position="390"/>
        <end position="411"/>
    </location>
</feature>
<feature type="region of interest" description="Disordered" evidence="2">
    <location>
        <begin position="1020"/>
        <end position="1135"/>
    </location>
</feature>
<feature type="region of interest" description="Disordered" evidence="2">
    <location>
        <begin position="2253"/>
        <end position="2316"/>
    </location>
</feature>
<feature type="region of interest" description="Disordered" evidence="2">
    <location>
        <begin position="2434"/>
        <end position="2458"/>
    </location>
</feature>
<feature type="compositionally biased region" description="Polar residues" evidence="2">
    <location>
        <begin position="1038"/>
        <end position="1050"/>
    </location>
</feature>
<feature type="compositionally biased region" description="Basic and acidic residues" evidence="2">
    <location>
        <begin position="1051"/>
        <end position="1061"/>
    </location>
</feature>
<feature type="compositionally biased region" description="Polar residues" evidence="2">
    <location>
        <begin position="1085"/>
        <end position="1097"/>
    </location>
</feature>
<feature type="compositionally biased region" description="Low complexity" evidence="2">
    <location>
        <begin position="1105"/>
        <end position="1132"/>
    </location>
</feature>
<feature type="compositionally biased region" description="Pro residues" evidence="2">
    <location>
        <begin position="2304"/>
        <end position="2316"/>
    </location>
</feature>
<feature type="active site" evidence="1">
    <location>
        <position position="34"/>
    </location>
</feature>
<feature type="active site" evidence="1">
    <location>
        <position position="163"/>
    </location>
</feature>
<feature type="active site" evidence="1">
    <location>
        <position position="165"/>
    </location>
</feature>
<feature type="site" description="Important for catalytic activity" evidence="1">
    <location>
        <position position="21"/>
    </location>
</feature>
<organismHost>
    <name type="scientific">Connochaetes taurinus</name>
    <name type="common">Blue wildebeest</name>
    <dbReference type="NCBI Taxonomy" id="9927"/>
</organismHost>
<accession>O36414</accession>
<sequence length="2606" mass="290017">MAFQAQTDTGLQLLATASSHQGDCKYGPFAGSQCLSVCVYYLASSFMNNAPVDSREGLDDVLLHGSTLDRLMRTHNFIPMNEFAQLSSVPKVLITHLWSCAIETSPELYGLLSDECVVCAPFIMSLRKALEMNYFEIPQYILYICNGKSGAIIIKNKTYFIFDPHCTSSRDTAAVYASASASSVVAYVGEASREYTACHLYFIPAESSDEPVNEYLLANYGIASALKRSGAYVNLKTLQTHAISESTQPIAPPVPAAPSGMQFFPTQASFPSSQSFVATSTPVPTKALKPTPSHQPSIPGAASLKTALHMATVKRKRIAISPLHSNTESDDSETGKKNTPVKITKPNEADVGEVETFWLDDDISTKQMLSETSSSEKNLPESIFSSSDWDTDSLLSTHESPPATPSLKSGQVNYTSTFSLDNEELGGSNLQLQDKTYKLDSTTFENLPQLLTSLEEHIEKVSKYPHKNDMPVIVDHSVNKCYREAVALYTIDSLLSHVIEQGLISKPEHKSQALNILRYIAIWLNKLSIYTNQVQELINTELYIPYIYQALFATKFDGKLEAMLIEKITKCFQTLHGTSLQDMKNLSKMIQASIKNTPYYDKAVNVQEETENLKSAVSLPYFITTEEELKKIQALAANLWKVIQDHNNSVSHEDSEFHRAVNSVKNFLPIPSDIQPLDYTLSDKADYLGDTVQQLVASITQECQTISNHMLSSMQSNVSFSADIPDFYSLRGKICTTLNNIQTSKDHLGLYNDKLQKARQQLAYLGYEISSITNSQWSTDYTEPVTPIPELGEIQSQLKIFNTNQQNQQMLQNILDEVESMLQAAKSEQTEQGLQKLAMLLPSIEAYLENAGTLLGPEGNAQFDRLRKEITDLIGSVDVMLAYVKNISAHTLATDAQTISNFPTDAKQQRVFQQALTQKVKDLFTQVNASLKTDRPPTFTENDMAALESLAVMSNDSTLSTAAAFYTKITLLLKSKPDCTVPLYDIAHLKSQLATANINSSTKRSLYMLLAQLNKETVSKKGLEQTQAPAPKGPTADTPVTDSKLIQDSQQNDRHQKEKPLKPKKPQAISLPAVKDTTKHLKPSKPQNLSLPVSTNKAPVEESPESSPIESTSPSHSPVSSMESQNGSFSLESSEEELMDTFAVDDHELSDTDHHMDVDKTTTSVAMDDKPSTSPEPPSQSLSAIVQQEERLGEEQAWKKIQIAFKTLDFTDITYSDWVHVTGITQHHDLKVSETFGPTLESLMSPLLQKLKKMTIGAALSLTTYGQAFKWPSIDWMTPYKNNVLFYLSTVRYPSLVDLAEQSRAEIDVLLQLRSSDALLKGTAGTYLESDSRNMLDIVSSIEDAASDYKLNVHTEVEKWTHQVHNIVNTGDSLPPKPDVILPSHLLNPAFEQTIASLNKDFRDYVYTVEKHLLAELSNDFQLLKVLISETENGFQAWEKETANKLLQLISHSLQNAPPEVRQYTVSHTDPLTLFDKLIHDSEVSSKLTYSEASAALHWVESTCAHIATQCQYPAVGAKLQAIIALVAKVKPKLESLVSLENQANNTDDINIIKQAISSLDPKRITGGTSKVQEWTQKVKDLEKLLADTELEASVVQNIQLLRHMALTARSTNLLANLKQKTTSLYEKWVKEHKTGPTSPITGTIKELDLYLTFKLKFIEYYETNQACIFSTFALPASKIDAKDALTPLTPQSPVFDFNTSGPSPPPPINFQQRLEAMCHLNYAPTQPIWLQVFPTVDNLSMDYIPIKNASPLSLQVIFNNFIETYFVQAPQGPQKDTSQYRGSTVLPNVLQAHFGTIATHLINSHWNNILENSTQALQSYTTVHSLHGTAKQNEFMAIIVAVHGLLQSLSTIYLDTPANSSDIPVVLSFRATLEIILWIWPKIIFYFLKMKSFQSGVSFLQIMINRCLINLTSAFVIQHITNSLIMAGVPEPNGYLFCPKYWTQLEPQAYLWGDEKFLQLCSNSQEKARVCFFVCALESINPVVLGQLWRSLKPTFLPDVHTPYDFLKVLVEAAYKPAYDCQVVSKARVDETPPYSYGFPGNSVLRVESKTTKPQGVTTIPISGFEMAAAAILQKFNPVIYLSTKKPVFSNEFTGEIFVVSPLLDCTGNEEPFSSLLTAPLQPVSENTTLASLYTQLEKDIFRSQKLWLQQHLSSPNNLSHLKHPIVLLDSEKKLTGAYSLTNNAPPPQLLNLRFAYDGKGLPNWPMEILQASTLSYSHQQALEDKTKDWIIDIEDLDDSLCIQNMFSAYPPEIHSGPSRSDSEDSEDSLSPTSPTPHLPKAEFTPLPDSPKPPQDPKDKSTPNPPRPTTFPTPLLPCYPLSEAYATLPKPISIKPSARVHFVVPPKSNLAADQLLRDFESLSLQDRPERPKDGPPDINYLVPPHGSYINLQPPNPRMAVIGTLRAADQKSVFTPTRPAGVGSRAKWVSRQLPPHDFVEPVENGDPPGPPGSEERKYSIRQESYQDPTVSLLLRQPPIIEAVRLFPDKSLTAAQMQQAFKQKQLHVCEKSHRKRLLSAPPTIAPNHLSIHEILADRASLVAPRPPFIPIDENLDIEPLFVQFIMEVSIEEAKNVLITFIKKIRQAVTHNAQLLASSIQRLAALYL</sequence>
<organism>
    <name type="scientific">Alcelaphine herpesvirus 1 (strain C500)</name>
    <name type="common">AlHV-1</name>
    <name type="synonym">Malignant catarrhal fever virus</name>
    <dbReference type="NCBI Taxonomy" id="654901"/>
    <lineage>
        <taxon>Viruses</taxon>
        <taxon>Duplodnaviria</taxon>
        <taxon>Heunggongvirae</taxon>
        <taxon>Peploviricota</taxon>
        <taxon>Herviviricetes</taxon>
        <taxon>Herpesvirales</taxon>
        <taxon>Orthoherpesviridae</taxon>
        <taxon>Gammaherpesvirinae</taxon>
        <taxon>Macavirus</taxon>
        <taxon>Macavirus alcelaphinegamma1</taxon>
    </lineage>
</organism>
<comment type="function">
    <text evidence="1">Large tegument protein that plays multiple roles in the viral cycle. During viral entry, remains associated with the capsid while most of the tegument is detached and participates in the capsid transport toward the host nucleus. Plays a role in the routing of the capsid at the nuclear pore complex and subsequent uncoating. Within the host nucleus, acts as a deneddylase and promotes the degradation of nuclear CRLs (cullin-RING ubiquitin ligases) and thereby stabilizes nuclear CRL substrates, while cytoplasmic CRLs remain unaffected. These modifications prevent host cell cycle S-phase progression and create a favorable environment allowing efficient viral genome replication. Participates later in the secondary envelopment of capsids. Indeed, plays a linker role for the association of the outer viral tegument to the capsids together with the inner tegument protein.</text>
</comment>
<comment type="catalytic activity">
    <reaction evidence="1">
        <text>Thiol-dependent hydrolysis of ester, thioester, amide, peptide and isopeptide bonds formed by the C-terminal Gly of ubiquitin (a 76-residue protein attached to proteins as an intracellular targeting signal).</text>
        <dbReference type="EC" id="3.4.19.12"/>
    </reaction>
</comment>
<comment type="subunit">
    <text evidence="1">Interacts with host CUL1 and CUL4A; these interactions inhibit the E3 ligase activity of cullins. Interacts with inner tegument protein. Interacts with capsid vertex specific component CVC2. Interacts with the major capsid protein/MCP.</text>
</comment>
<comment type="subcellular location">
    <subcellularLocation>
        <location evidence="1">Virion tegument</location>
    </subcellularLocation>
    <subcellularLocation>
        <location evidence="1">Host cytoplasm</location>
    </subcellularLocation>
    <subcellularLocation>
        <location evidence="1">Host nucleus</location>
    </subcellularLocation>
    <text evidence="1">Tightly associated with the capsid.</text>
</comment>
<comment type="similarity">
    <text evidence="1">Belongs to the herpesviridae large tegument protein family.</text>
</comment>
<proteinExistence type="inferred from homology"/>
<evidence type="ECO:0000255" key="1">
    <source>
        <dbReference type="HAMAP-Rule" id="MF_04044"/>
    </source>
</evidence>
<evidence type="ECO:0000256" key="2">
    <source>
        <dbReference type="SAM" id="MobiDB-lite"/>
    </source>
</evidence>
<name>LTP_ALHV1</name>
<dbReference type="EC" id="3.4.19.12" evidence="1"/>
<dbReference type="EC" id="3.4.22.-" evidence="1"/>
<dbReference type="EMBL" id="AF005370">
    <property type="protein sequence ID" value="AAC58111.1"/>
    <property type="molecule type" value="Genomic_DNA"/>
</dbReference>
<dbReference type="PIR" id="T03159">
    <property type="entry name" value="T03159"/>
</dbReference>
<dbReference type="RefSeq" id="NP_065563.1">
    <property type="nucleotide sequence ID" value="NC_002531.1"/>
</dbReference>
<dbReference type="SMR" id="O36414"/>
<dbReference type="KEGG" id="vg:911802"/>
<dbReference type="Proteomes" id="UP000000941">
    <property type="component" value="Segment"/>
</dbReference>
<dbReference type="GO" id="GO:0030430">
    <property type="term" value="C:host cell cytoplasm"/>
    <property type="evidence" value="ECO:0007669"/>
    <property type="project" value="UniProtKB-SubCell"/>
</dbReference>
<dbReference type="GO" id="GO:0042025">
    <property type="term" value="C:host cell nucleus"/>
    <property type="evidence" value="ECO:0007669"/>
    <property type="project" value="UniProtKB-SubCell"/>
</dbReference>
<dbReference type="GO" id="GO:0019033">
    <property type="term" value="C:viral tegument"/>
    <property type="evidence" value="ECO:0007669"/>
    <property type="project" value="UniProtKB-SubCell"/>
</dbReference>
<dbReference type="GO" id="GO:0004843">
    <property type="term" value="F:cysteine-type deubiquitinase activity"/>
    <property type="evidence" value="ECO:0007669"/>
    <property type="project" value="UniProtKB-EC"/>
</dbReference>
<dbReference type="GO" id="GO:0006508">
    <property type="term" value="P:proteolysis"/>
    <property type="evidence" value="ECO:0007669"/>
    <property type="project" value="UniProtKB-KW"/>
</dbReference>
<dbReference type="GO" id="GO:0039648">
    <property type="term" value="P:symbiont-mediated perturbation of host ubiquitin-like protein modification"/>
    <property type="evidence" value="ECO:0007669"/>
    <property type="project" value="UniProtKB-KW"/>
</dbReference>
<dbReference type="Gene3D" id="3.90.70.120">
    <property type="match status" value="1"/>
</dbReference>
<dbReference type="HAMAP" id="MF_04044">
    <property type="entry name" value="HSV_LTP"/>
    <property type="match status" value="1"/>
</dbReference>
<dbReference type="InterPro" id="IPR006928">
    <property type="entry name" value="Herpes_teg_USP"/>
</dbReference>
<dbReference type="InterPro" id="IPR034702">
    <property type="entry name" value="HSV_LTP"/>
</dbReference>
<dbReference type="InterPro" id="IPR038765">
    <property type="entry name" value="Papain-like_cys_pep_sf"/>
</dbReference>
<dbReference type="PANTHER" id="PTHR24216:SF65">
    <property type="entry name" value="PAXILLIN-LIKE PROTEIN 1"/>
    <property type="match status" value="1"/>
</dbReference>
<dbReference type="PANTHER" id="PTHR24216">
    <property type="entry name" value="PAXILLIN-RELATED"/>
    <property type="match status" value="1"/>
</dbReference>
<dbReference type="Pfam" id="PF04843">
    <property type="entry name" value="Herpes_teg_N"/>
    <property type="match status" value="1"/>
</dbReference>
<dbReference type="SUPFAM" id="SSF54001">
    <property type="entry name" value="Cysteine proteinases"/>
    <property type="match status" value="1"/>
</dbReference>
<dbReference type="PROSITE" id="PS51521">
    <property type="entry name" value="HTUSP"/>
    <property type="match status" value="1"/>
</dbReference>